<organism>
    <name type="scientific">Streptococcus pneumoniae (strain Taiwan19F-14)</name>
    <dbReference type="NCBI Taxonomy" id="487213"/>
    <lineage>
        <taxon>Bacteria</taxon>
        <taxon>Bacillati</taxon>
        <taxon>Bacillota</taxon>
        <taxon>Bacilli</taxon>
        <taxon>Lactobacillales</taxon>
        <taxon>Streptococcaceae</taxon>
        <taxon>Streptococcus</taxon>
    </lineage>
</organism>
<evidence type="ECO:0000255" key="1">
    <source>
        <dbReference type="HAMAP-Rule" id="MF_01567"/>
    </source>
</evidence>
<dbReference type="EMBL" id="CP000921">
    <property type="protein sequence ID" value="ACO23801.1"/>
    <property type="molecule type" value="Genomic_DNA"/>
</dbReference>
<dbReference type="RefSeq" id="WP_000743620.1">
    <property type="nucleotide sequence ID" value="NC_012469.1"/>
</dbReference>
<dbReference type="SMR" id="C1CPL6"/>
<dbReference type="KEGG" id="snt:SPT_0390"/>
<dbReference type="HOGENOM" id="CLU_046981_0_0_9"/>
<dbReference type="Gene3D" id="1.20.1570.10">
    <property type="entry name" value="dip2346 domain like"/>
    <property type="match status" value="1"/>
</dbReference>
<dbReference type="Gene3D" id="3.10.630.10">
    <property type="entry name" value="dip2346 domain like"/>
    <property type="match status" value="1"/>
</dbReference>
<dbReference type="Gene3D" id="3.40.140.40">
    <property type="entry name" value="Domain of unknown function (DUF1846), C-terminal subdomain"/>
    <property type="match status" value="1"/>
</dbReference>
<dbReference type="HAMAP" id="MF_01567">
    <property type="entry name" value="UPF0371"/>
    <property type="match status" value="1"/>
</dbReference>
<dbReference type="InterPro" id="IPR014999">
    <property type="entry name" value="DUF1846"/>
</dbReference>
<dbReference type="InterPro" id="IPR048441">
    <property type="entry name" value="DUF1846_C"/>
</dbReference>
<dbReference type="InterPro" id="IPR048496">
    <property type="entry name" value="DUF1846_N"/>
</dbReference>
<dbReference type="NCBIfam" id="NF010184">
    <property type="entry name" value="PRK13663.1"/>
    <property type="match status" value="1"/>
</dbReference>
<dbReference type="Pfam" id="PF08903">
    <property type="entry name" value="DUF1846"/>
    <property type="match status" value="1"/>
</dbReference>
<dbReference type="Pfam" id="PF20921">
    <property type="entry name" value="DUF1846_C"/>
    <property type="match status" value="1"/>
</dbReference>
<dbReference type="PIRSF" id="PIRSF033132">
    <property type="entry name" value="DUF1846"/>
    <property type="match status" value="1"/>
</dbReference>
<sequence length="494" mass="55093">MKKQAFSSEQYLNLQRDHILERINQFDGKLYLEFGGKMLEDFHAARVLPGYEPDNKIKLLQELKEQVEVVIAINASNIEHSKARGDLGISYDQEVLRLIDKFNELGIFVGSVVITQYAGQPAADAFRNQLEKNGIDSYLHYPIKGYPTDMDHIISPEGMGKNDYIKTSRNLIVVTAPGPGSGKLATCMSNMYHDQINVIKSGYAKFETFPVWNLPLHHPVNLAYEAATADLDDVNMIDPFHLQTYGETTVNYNRDIEIFPVLKRMLERILGKSPYASPTDMGVNMVGFAITDDEAAVEASKQEIIRRYYQTVLDFKAEKVGEAAVKKIELLMNDLGITPADRKVAVVARQKAEETGGPALAFELPNGEIVTGKNSELFGPTAAALINAIKKSADIAKEVKLIEPEVVKPIQGLKIDHLGSRNPRLHSNEILIALAITATENPDAARAMEELGNLKGSEAHSTIILTDEDKNVLRKLGINVTFDPYYQYDRLYRK</sequence>
<accession>C1CPL6</accession>
<reference key="1">
    <citation type="journal article" date="2010" name="Genome Biol.">
        <title>Structure and dynamics of the pan-genome of Streptococcus pneumoniae and closely related species.</title>
        <authorList>
            <person name="Donati C."/>
            <person name="Hiller N.L."/>
            <person name="Tettelin H."/>
            <person name="Muzzi A."/>
            <person name="Croucher N.J."/>
            <person name="Angiuoli S.V."/>
            <person name="Oggioni M."/>
            <person name="Dunning Hotopp J.C."/>
            <person name="Hu F.Z."/>
            <person name="Riley D.R."/>
            <person name="Covacci A."/>
            <person name="Mitchell T.J."/>
            <person name="Bentley S.D."/>
            <person name="Kilian M."/>
            <person name="Ehrlich G.D."/>
            <person name="Rappuoli R."/>
            <person name="Moxon E.R."/>
            <person name="Masignani V."/>
        </authorList>
    </citation>
    <scope>NUCLEOTIDE SEQUENCE [LARGE SCALE GENOMIC DNA]</scope>
    <source>
        <strain>Taiwan19F-14</strain>
    </source>
</reference>
<proteinExistence type="inferred from homology"/>
<feature type="chain" id="PRO_1000185467" description="UPF0371 protein SPT_0390">
    <location>
        <begin position="1"/>
        <end position="494"/>
    </location>
</feature>
<gene>
    <name type="ordered locus">SPT_0390</name>
</gene>
<comment type="similarity">
    <text evidence="1">Belongs to the UPF0371 family.</text>
</comment>
<protein>
    <recommendedName>
        <fullName evidence="1">UPF0371 protein SPT_0390</fullName>
    </recommendedName>
</protein>
<name>Y390_STRZT</name>